<evidence type="ECO:0000255" key="1">
    <source>
        <dbReference type="HAMAP-Rule" id="MF_00113"/>
    </source>
</evidence>
<organism>
    <name type="scientific">Hahella chejuensis (strain KCTC 2396)</name>
    <dbReference type="NCBI Taxonomy" id="349521"/>
    <lineage>
        <taxon>Bacteria</taxon>
        <taxon>Pseudomonadati</taxon>
        <taxon>Pseudomonadota</taxon>
        <taxon>Gammaproteobacteria</taxon>
        <taxon>Oceanospirillales</taxon>
        <taxon>Hahellaceae</taxon>
        <taxon>Hahella</taxon>
    </lineage>
</organism>
<feature type="chain" id="PRO_1000015221" description="S-adenosylmethionine:tRNA ribosyltransferase-isomerase">
    <location>
        <begin position="1"/>
        <end position="351"/>
    </location>
</feature>
<accession>Q2SDV0</accession>
<comment type="function">
    <text evidence="1">Transfers and isomerizes the ribose moiety from AdoMet to the 7-aminomethyl group of 7-deazaguanine (preQ1-tRNA) to give epoxyqueuosine (oQ-tRNA).</text>
</comment>
<comment type="catalytic activity">
    <reaction evidence="1">
        <text>7-aminomethyl-7-carbaguanosine(34) in tRNA + S-adenosyl-L-methionine = epoxyqueuosine(34) in tRNA + adenine + L-methionine + 2 H(+)</text>
        <dbReference type="Rhea" id="RHEA:32155"/>
        <dbReference type="Rhea" id="RHEA-COMP:10342"/>
        <dbReference type="Rhea" id="RHEA-COMP:18582"/>
        <dbReference type="ChEBI" id="CHEBI:15378"/>
        <dbReference type="ChEBI" id="CHEBI:16708"/>
        <dbReference type="ChEBI" id="CHEBI:57844"/>
        <dbReference type="ChEBI" id="CHEBI:59789"/>
        <dbReference type="ChEBI" id="CHEBI:82833"/>
        <dbReference type="ChEBI" id="CHEBI:194443"/>
        <dbReference type="EC" id="2.4.99.17"/>
    </reaction>
</comment>
<comment type="pathway">
    <text evidence="1">tRNA modification; tRNA-queuosine biosynthesis.</text>
</comment>
<comment type="subunit">
    <text evidence="1">Monomer.</text>
</comment>
<comment type="subcellular location">
    <subcellularLocation>
        <location evidence="1">Cytoplasm</location>
    </subcellularLocation>
</comment>
<comment type="similarity">
    <text evidence="1">Belongs to the QueA family.</text>
</comment>
<protein>
    <recommendedName>
        <fullName evidence="1">S-adenosylmethionine:tRNA ribosyltransferase-isomerase</fullName>
        <ecNumber evidence="1">2.4.99.17</ecNumber>
    </recommendedName>
    <alternativeName>
        <fullName evidence="1">Queuosine biosynthesis protein QueA</fullName>
    </alternativeName>
</protein>
<proteinExistence type="inferred from homology"/>
<keyword id="KW-0963">Cytoplasm</keyword>
<keyword id="KW-0671">Queuosine biosynthesis</keyword>
<keyword id="KW-1185">Reference proteome</keyword>
<keyword id="KW-0949">S-adenosyl-L-methionine</keyword>
<keyword id="KW-0808">Transferase</keyword>
<sequence>MRVDDFDFELPPELIARRPLAERSSSRLLCLDAETGEINHRGFKDLLGMVNPGDLLVFNDTRVIPARLFGQKRSGGKVEVMVERVVSMTEMLAHVRASKAPKPGVEILIEENYVLTMVEREGDLFRLRVSQGGSVSELLERCGHMPLPPYIDREDDLSDRERYQTVYSRQPGAVAAPTAGLHFDEALLLAMSQKGVETAFVTLHVGAGTFQPVRVDVVQDHQMHSEYLEVSADVCERVRQVKAAGGRVVAVGTTAVRALETASRSGSIEPYAGDTSIFIYPGYEFVTVDALVTNFHLPKSTLLMLVSAFAGREHILAAYQEAIEQRYRFFSYGDAMFLHRRQSGLEDAGAN</sequence>
<name>QUEA_HAHCH</name>
<dbReference type="EC" id="2.4.99.17" evidence="1"/>
<dbReference type="EMBL" id="CP000155">
    <property type="protein sequence ID" value="ABC31174.1"/>
    <property type="molecule type" value="Genomic_DNA"/>
</dbReference>
<dbReference type="RefSeq" id="WP_011398241.1">
    <property type="nucleotide sequence ID" value="NC_007645.1"/>
</dbReference>
<dbReference type="SMR" id="Q2SDV0"/>
<dbReference type="STRING" id="349521.HCH_04470"/>
<dbReference type="KEGG" id="hch:HCH_04470"/>
<dbReference type="eggNOG" id="COG0809">
    <property type="taxonomic scope" value="Bacteria"/>
</dbReference>
<dbReference type="HOGENOM" id="CLU_039110_1_0_6"/>
<dbReference type="OrthoDB" id="9805933at2"/>
<dbReference type="UniPathway" id="UPA00392"/>
<dbReference type="Proteomes" id="UP000000238">
    <property type="component" value="Chromosome"/>
</dbReference>
<dbReference type="GO" id="GO:0005737">
    <property type="term" value="C:cytoplasm"/>
    <property type="evidence" value="ECO:0007669"/>
    <property type="project" value="UniProtKB-SubCell"/>
</dbReference>
<dbReference type="GO" id="GO:0051075">
    <property type="term" value="F:S-adenosylmethionine:tRNA ribosyltransferase-isomerase activity"/>
    <property type="evidence" value="ECO:0007669"/>
    <property type="project" value="UniProtKB-EC"/>
</dbReference>
<dbReference type="GO" id="GO:0008616">
    <property type="term" value="P:queuosine biosynthetic process"/>
    <property type="evidence" value="ECO:0007669"/>
    <property type="project" value="UniProtKB-UniRule"/>
</dbReference>
<dbReference type="GO" id="GO:0002099">
    <property type="term" value="P:tRNA wobble guanine modification"/>
    <property type="evidence" value="ECO:0007669"/>
    <property type="project" value="TreeGrafter"/>
</dbReference>
<dbReference type="FunFam" id="3.40.1780.10:FF:000001">
    <property type="entry name" value="S-adenosylmethionine:tRNA ribosyltransferase-isomerase"/>
    <property type="match status" value="1"/>
</dbReference>
<dbReference type="Gene3D" id="2.40.10.240">
    <property type="entry name" value="QueA-like"/>
    <property type="match status" value="1"/>
</dbReference>
<dbReference type="Gene3D" id="3.40.1780.10">
    <property type="entry name" value="QueA-like"/>
    <property type="match status" value="1"/>
</dbReference>
<dbReference type="HAMAP" id="MF_00113">
    <property type="entry name" value="QueA"/>
    <property type="match status" value="1"/>
</dbReference>
<dbReference type="InterPro" id="IPR003699">
    <property type="entry name" value="QueA"/>
</dbReference>
<dbReference type="InterPro" id="IPR042118">
    <property type="entry name" value="QueA_dom1"/>
</dbReference>
<dbReference type="InterPro" id="IPR042119">
    <property type="entry name" value="QueA_dom2"/>
</dbReference>
<dbReference type="InterPro" id="IPR036100">
    <property type="entry name" value="QueA_sf"/>
</dbReference>
<dbReference type="NCBIfam" id="NF001140">
    <property type="entry name" value="PRK00147.1"/>
    <property type="match status" value="1"/>
</dbReference>
<dbReference type="NCBIfam" id="TIGR00113">
    <property type="entry name" value="queA"/>
    <property type="match status" value="1"/>
</dbReference>
<dbReference type="PANTHER" id="PTHR30307">
    <property type="entry name" value="S-ADENOSYLMETHIONINE:TRNA RIBOSYLTRANSFERASE-ISOMERASE"/>
    <property type="match status" value="1"/>
</dbReference>
<dbReference type="PANTHER" id="PTHR30307:SF0">
    <property type="entry name" value="S-ADENOSYLMETHIONINE:TRNA RIBOSYLTRANSFERASE-ISOMERASE"/>
    <property type="match status" value="1"/>
</dbReference>
<dbReference type="Pfam" id="PF02547">
    <property type="entry name" value="Queuosine_synth"/>
    <property type="match status" value="1"/>
</dbReference>
<dbReference type="SUPFAM" id="SSF111337">
    <property type="entry name" value="QueA-like"/>
    <property type="match status" value="1"/>
</dbReference>
<gene>
    <name evidence="1" type="primary">queA</name>
    <name type="ordered locus">HCH_04470</name>
</gene>
<reference key="1">
    <citation type="journal article" date="2005" name="Nucleic Acids Res.">
        <title>Genomic blueprint of Hahella chejuensis, a marine microbe producing an algicidal agent.</title>
        <authorList>
            <person name="Jeong H."/>
            <person name="Yim J.H."/>
            <person name="Lee C."/>
            <person name="Choi S.-H."/>
            <person name="Park Y.K."/>
            <person name="Yoon S.H."/>
            <person name="Hur C.-G."/>
            <person name="Kang H.-Y."/>
            <person name="Kim D."/>
            <person name="Lee H.H."/>
            <person name="Park K.H."/>
            <person name="Park S.-H."/>
            <person name="Park H.-S."/>
            <person name="Lee H.K."/>
            <person name="Oh T.K."/>
            <person name="Kim J.F."/>
        </authorList>
    </citation>
    <scope>NUCLEOTIDE SEQUENCE [LARGE SCALE GENOMIC DNA]</scope>
    <source>
        <strain>KCTC 2396</strain>
    </source>
</reference>